<organism>
    <name type="scientific">Methylobacterium sp. (strain 4-46)</name>
    <dbReference type="NCBI Taxonomy" id="426117"/>
    <lineage>
        <taxon>Bacteria</taxon>
        <taxon>Pseudomonadati</taxon>
        <taxon>Pseudomonadota</taxon>
        <taxon>Alphaproteobacteria</taxon>
        <taxon>Hyphomicrobiales</taxon>
        <taxon>Methylobacteriaceae</taxon>
        <taxon>Methylobacterium</taxon>
    </lineage>
</organism>
<proteinExistence type="inferred from homology"/>
<evidence type="ECO:0000255" key="1">
    <source>
        <dbReference type="HAMAP-Rule" id="MF_01217"/>
    </source>
</evidence>
<evidence type="ECO:0000255" key="2">
    <source>
        <dbReference type="PROSITE-ProRule" id="PRU00258"/>
    </source>
</evidence>
<protein>
    <recommendedName>
        <fullName evidence="1">Acyl carrier protein</fullName>
        <shortName evidence="1">ACP</shortName>
    </recommendedName>
</protein>
<comment type="function">
    <text evidence="1">Carrier of the growing fatty acid chain in fatty acid biosynthesis.</text>
</comment>
<comment type="pathway">
    <text evidence="1">Lipid metabolism; fatty acid biosynthesis.</text>
</comment>
<comment type="subcellular location">
    <subcellularLocation>
        <location evidence="1">Cytoplasm</location>
    </subcellularLocation>
</comment>
<comment type="PTM">
    <text evidence="1">4'-phosphopantetheine is transferred from CoA to a specific serine of apo-ACP by AcpS. This modification is essential for activity because fatty acids are bound in thioester linkage to the sulfhydryl of the prosthetic group.</text>
</comment>
<comment type="similarity">
    <text evidence="1">Belongs to the acyl carrier protein (ACP) family.</text>
</comment>
<gene>
    <name evidence="1" type="primary">acpP</name>
    <name type="ordered locus">M446_3198</name>
</gene>
<accession>B0UNZ6</accession>
<dbReference type="EMBL" id="CP000943">
    <property type="protein sequence ID" value="ACA17604.1"/>
    <property type="molecule type" value="Genomic_DNA"/>
</dbReference>
<dbReference type="RefSeq" id="WP_012333004.1">
    <property type="nucleotide sequence ID" value="NC_010511.1"/>
</dbReference>
<dbReference type="SMR" id="B0UNZ6"/>
<dbReference type="STRING" id="426117.M446_3198"/>
<dbReference type="KEGG" id="met:M446_3198"/>
<dbReference type="eggNOG" id="COG0236">
    <property type="taxonomic scope" value="Bacteria"/>
</dbReference>
<dbReference type="HOGENOM" id="CLU_108696_5_1_5"/>
<dbReference type="UniPathway" id="UPA00094"/>
<dbReference type="GO" id="GO:0005829">
    <property type="term" value="C:cytosol"/>
    <property type="evidence" value="ECO:0007669"/>
    <property type="project" value="TreeGrafter"/>
</dbReference>
<dbReference type="GO" id="GO:0016020">
    <property type="term" value="C:membrane"/>
    <property type="evidence" value="ECO:0007669"/>
    <property type="project" value="GOC"/>
</dbReference>
<dbReference type="GO" id="GO:0000035">
    <property type="term" value="F:acyl binding"/>
    <property type="evidence" value="ECO:0007669"/>
    <property type="project" value="TreeGrafter"/>
</dbReference>
<dbReference type="GO" id="GO:0000036">
    <property type="term" value="F:acyl carrier activity"/>
    <property type="evidence" value="ECO:0007669"/>
    <property type="project" value="UniProtKB-UniRule"/>
</dbReference>
<dbReference type="GO" id="GO:0009245">
    <property type="term" value="P:lipid A biosynthetic process"/>
    <property type="evidence" value="ECO:0007669"/>
    <property type="project" value="TreeGrafter"/>
</dbReference>
<dbReference type="FunFam" id="1.10.1200.10:FF:000001">
    <property type="entry name" value="Acyl carrier protein"/>
    <property type="match status" value="1"/>
</dbReference>
<dbReference type="Gene3D" id="1.10.1200.10">
    <property type="entry name" value="ACP-like"/>
    <property type="match status" value="1"/>
</dbReference>
<dbReference type="HAMAP" id="MF_01217">
    <property type="entry name" value="Acyl_carrier"/>
    <property type="match status" value="1"/>
</dbReference>
<dbReference type="InterPro" id="IPR003231">
    <property type="entry name" value="ACP"/>
</dbReference>
<dbReference type="InterPro" id="IPR036736">
    <property type="entry name" value="ACP-like_sf"/>
</dbReference>
<dbReference type="InterPro" id="IPR009081">
    <property type="entry name" value="PP-bd_ACP"/>
</dbReference>
<dbReference type="InterPro" id="IPR006162">
    <property type="entry name" value="Ppantetheine_attach_site"/>
</dbReference>
<dbReference type="NCBIfam" id="TIGR00517">
    <property type="entry name" value="acyl_carrier"/>
    <property type="match status" value="1"/>
</dbReference>
<dbReference type="NCBIfam" id="NF002148">
    <property type="entry name" value="PRK00982.1-2"/>
    <property type="match status" value="1"/>
</dbReference>
<dbReference type="NCBIfam" id="NF002149">
    <property type="entry name" value="PRK00982.1-3"/>
    <property type="match status" value="1"/>
</dbReference>
<dbReference type="NCBIfam" id="NF002150">
    <property type="entry name" value="PRK00982.1-4"/>
    <property type="match status" value="1"/>
</dbReference>
<dbReference type="NCBIfam" id="NF002151">
    <property type="entry name" value="PRK00982.1-5"/>
    <property type="match status" value="1"/>
</dbReference>
<dbReference type="PANTHER" id="PTHR20863">
    <property type="entry name" value="ACYL CARRIER PROTEIN"/>
    <property type="match status" value="1"/>
</dbReference>
<dbReference type="PANTHER" id="PTHR20863:SF76">
    <property type="entry name" value="CARRIER DOMAIN-CONTAINING PROTEIN"/>
    <property type="match status" value="1"/>
</dbReference>
<dbReference type="Pfam" id="PF00550">
    <property type="entry name" value="PP-binding"/>
    <property type="match status" value="1"/>
</dbReference>
<dbReference type="SUPFAM" id="SSF47336">
    <property type="entry name" value="ACP-like"/>
    <property type="match status" value="1"/>
</dbReference>
<dbReference type="PROSITE" id="PS50075">
    <property type="entry name" value="CARRIER"/>
    <property type="match status" value="1"/>
</dbReference>
<dbReference type="PROSITE" id="PS00012">
    <property type="entry name" value="PHOSPHOPANTETHEINE"/>
    <property type="match status" value="1"/>
</dbReference>
<reference key="1">
    <citation type="submission" date="2008-02" db="EMBL/GenBank/DDBJ databases">
        <title>Complete sequence of chromosome of Methylobacterium sp. 4-46.</title>
        <authorList>
            <consortium name="US DOE Joint Genome Institute"/>
            <person name="Copeland A."/>
            <person name="Lucas S."/>
            <person name="Lapidus A."/>
            <person name="Glavina del Rio T."/>
            <person name="Dalin E."/>
            <person name="Tice H."/>
            <person name="Bruce D."/>
            <person name="Goodwin L."/>
            <person name="Pitluck S."/>
            <person name="Chertkov O."/>
            <person name="Brettin T."/>
            <person name="Detter J.C."/>
            <person name="Han C."/>
            <person name="Kuske C.R."/>
            <person name="Schmutz J."/>
            <person name="Larimer F."/>
            <person name="Land M."/>
            <person name="Hauser L."/>
            <person name="Kyrpides N."/>
            <person name="Ivanova N."/>
            <person name="Marx C.J."/>
            <person name="Richardson P."/>
        </authorList>
    </citation>
    <scope>NUCLEOTIDE SEQUENCE [LARGE SCALE GENOMIC DNA]</scope>
    <source>
        <strain>4-46</strain>
    </source>
</reference>
<feature type="chain" id="PRO_1000139044" description="Acyl carrier protein">
    <location>
        <begin position="1"/>
        <end position="78"/>
    </location>
</feature>
<feature type="domain" description="Carrier" evidence="2">
    <location>
        <begin position="2"/>
        <end position="77"/>
    </location>
</feature>
<feature type="modified residue" description="O-(pantetheine 4'-phosphoryl)serine" evidence="2">
    <location>
        <position position="37"/>
    </location>
</feature>
<sequence length="78" mass="8540">MSDIADRVKKIVVEHLGVEAEKVTENANFIDDLGADSLDTVELVMAFEEEFNVEIPDDAAETIQTVGDAIKFLEKNSG</sequence>
<name>ACP_METS4</name>
<keyword id="KW-0963">Cytoplasm</keyword>
<keyword id="KW-0275">Fatty acid biosynthesis</keyword>
<keyword id="KW-0276">Fatty acid metabolism</keyword>
<keyword id="KW-0444">Lipid biosynthesis</keyword>
<keyword id="KW-0443">Lipid metabolism</keyword>
<keyword id="KW-0596">Phosphopantetheine</keyword>
<keyword id="KW-0597">Phosphoprotein</keyword>